<keyword id="KW-0342">GTP-binding</keyword>
<keyword id="KW-0547">Nucleotide-binding</keyword>
<keyword id="KW-0677">Repeat</keyword>
<keyword id="KW-0690">Ribosome biogenesis</keyword>
<accession>A0KUJ9</accession>
<evidence type="ECO:0000255" key="1">
    <source>
        <dbReference type="HAMAP-Rule" id="MF_00195"/>
    </source>
</evidence>
<proteinExistence type="inferred from homology"/>
<gene>
    <name evidence="1" type="primary">der</name>
    <name type="synonym">engA</name>
    <name type="ordered locus">Shewana3_1233</name>
</gene>
<name>DER_SHESA</name>
<feature type="chain" id="PRO_1000011738" description="GTPase Der">
    <location>
        <begin position="1"/>
        <end position="488"/>
    </location>
</feature>
<feature type="domain" description="EngA-type G 1">
    <location>
        <begin position="3"/>
        <end position="166"/>
    </location>
</feature>
<feature type="domain" description="EngA-type G 2">
    <location>
        <begin position="199"/>
        <end position="372"/>
    </location>
</feature>
<feature type="domain" description="KH-like" evidence="1">
    <location>
        <begin position="373"/>
        <end position="457"/>
    </location>
</feature>
<feature type="binding site" evidence="1">
    <location>
        <begin position="9"/>
        <end position="16"/>
    </location>
    <ligand>
        <name>GTP</name>
        <dbReference type="ChEBI" id="CHEBI:37565"/>
        <label>1</label>
    </ligand>
</feature>
<feature type="binding site" evidence="1">
    <location>
        <begin position="56"/>
        <end position="60"/>
    </location>
    <ligand>
        <name>GTP</name>
        <dbReference type="ChEBI" id="CHEBI:37565"/>
        <label>1</label>
    </ligand>
</feature>
<feature type="binding site" evidence="1">
    <location>
        <begin position="118"/>
        <end position="121"/>
    </location>
    <ligand>
        <name>GTP</name>
        <dbReference type="ChEBI" id="CHEBI:37565"/>
        <label>1</label>
    </ligand>
</feature>
<feature type="binding site" evidence="1">
    <location>
        <begin position="205"/>
        <end position="212"/>
    </location>
    <ligand>
        <name>GTP</name>
        <dbReference type="ChEBI" id="CHEBI:37565"/>
        <label>2</label>
    </ligand>
</feature>
<feature type="binding site" evidence="1">
    <location>
        <begin position="252"/>
        <end position="256"/>
    </location>
    <ligand>
        <name>GTP</name>
        <dbReference type="ChEBI" id="CHEBI:37565"/>
        <label>2</label>
    </ligand>
</feature>
<feature type="binding site" evidence="1">
    <location>
        <begin position="317"/>
        <end position="320"/>
    </location>
    <ligand>
        <name>GTP</name>
        <dbReference type="ChEBI" id="CHEBI:37565"/>
        <label>2</label>
    </ligand>
</feature>
<protein>
    <recommendedName>
        <fullName evidence="1">GTPase Der</fullName>
    </recommendedName>
    <alternativeName>
        <fullName evidence="1">GTP-binding protein EngA</fullName>
    </alternativeName>
</protein>
<sequence length="488" mass="54646">MIPVVALVGRPNVGKSTLFNRLTRTRDALVADFPGLTRDRKYGRAFLSGYEFIVVDTGGIDGTEEGIETKMAEQSLAAIEEADVVLFMTDARAGLTAADLSIAQHLRSRQKTTFVVANKIDGIDADSACAEFWSLGLGEVYQMAAAQGRGVTNMIEYALTPYAEAMGIERQGEEEEVDERQYTEEEAEAEQKRLQDLPIKLAIIGKPNVGKSTLTNRILGEERVVVYDEPGTTRDSIYIPMERDGREYVIIDTAGVRRRSKVHEVIEKFSVIKTLKAVEDANVVLLIIDAREGIAEQDLGLLGFALNAGRALVIAVNKWDGIDQGIKDRVKSELDRRLGFIDFARIHFISALHGTGVGHLFESIEEAYDSATRRVSTSMLTRIMQMSQDDHQPPLVNGRRVKLKYAHAGGYNPPIVVIHGNQVSKLPDSYKRYMMNYFRRSLKVVGTPIQLRFQEGDNPFENKVEKLTMSQERRRKRALSHIKDRKTK</sequence>
<organism>
    <name type="scientific">Shewanella sp. (strain ANA-3)</name>
    <dbReference type="NCBI Taxonomy" id="94122"/>
    <lineage>
        <taxon>Bacteria</taxon>
        <taxon>Pseudomonadati</taxon>
        <taxon>Pseudomonadota</taxon>
        <taxon>Gammaproteobacteria</taxon>
        <taxon>Alteromonadales</taxon>
        <taxon>Shewanellaceae</taxon>
        <taxon>Shewanella</taxon>
    </lineage>
</organism>
<comment type="function">
    <text evidence="1">GTPase that plays an essential role in the late steps of ribosome biogenesis.</text>
</comment>
<comment type="subunit">
    <text evidence="1">Associates with the 50S ribosomal subunit.</text>
</comment>
<comment type="similarity">
    <text evidence="1">Belongs to the TRAFAC class TrmE-Era-EngA-EngB-Septin-like GTPase superfamily. EngA (Der) GTPase family.</text>
</comment>
<dbReference type="EMBL" id="CP000469">
    <property type="protein sequence ID" value="ABK47468.1"/>
    <property type="molecule type" value="Genomic_DNA"/>
</dbReference>
<dbReference type="RefSeq" id="WP_011622020.1">
    <property type="nucleotide sequence ID" value="NC_008577.1"/>
</dbReference>
<dbReference type="SMR" id="A0KUJ9"/>
<dbReference type="STRING" id="94122.Shewana3_1233"/>
<dbReference type="GeneID" id="94727244"/>
<dbReference type="KEGG" id="shn:Shewana3_1233"/>
<dbReference type="eggNOG" id="COG1160">
    <property type="taxonomic scope" value="Bacteria"/>
</dbReference>
<dbReference type="HOGENOM" id="CLU_016077_6_2_6"/>
<dbReference type="OrthoDB" id="9805918at2"/>
<dbReference type="Proteomes" id="UP000002589">
    <property type="component" value="Chromosome"/>
</dbReference>
<dbReference type="GO" id="GO:0005525">
    <property type="term" value="F:GTP binding"/>
    <property type="evidence" value="ECO:0007669"/>
    <property type="project" value="UniProtKB-UniRule"/>
</dbReference>
<dbReference type="GO" id="GO:0043022">
    <property type="term" value="F:ribosome binding"/>
    <property type="evidence" value="ECO:0007669"/>
    <property type="project" value="TreeGrafter"/>
</dbReference>
<dbReference type="GO" id="GO:0042254">
    <property type="term" value="P:ribosome biogenesis"/>
    <property type="evidence" value="ECO:0007669"/>
    <property type="project" value="UniProtKB-KW"/>
</dbReference>
<dbReference type="CDD" id="cd01894">
    <property type="entry name" value="EngA1"/>
    <property type="match status" value="1"/>
</dbReference>
<dbReference type="CDD" id="cd01895">
    <property type="entry name" value="EngA2"/>
    <property type="match status" value="1"/>
</dbReference>
<dbReference type="FunFam" id="3.30.300.20:FF:000004">
    <property type="entry name" value="GTPase Der"/>
    <property type="match status" value="1"/>
</dbReference>
<dbReference type="FunFam" id="3.40.50.300:FF:000040">
    <property type="entry name" value="GTPase Der"/>
    <property type="match status" value="1"/>
</dbReference>
<dbReference type="FunFam" id="3.40.50.300:FF:000057">
    <property type="entry name" value="GTPase Der"/>
    <property type="match status" value="1"/>
</dbReference>
<dbReference type="Gene3D" id="3.30.300.20">
    <property type="match status" value="1"/>
</dbReference>
<dbReference type="Gene3D" id="3.40.50.300">
    <property type="entry name" value="P-loop containing nucleotide triphosphate hydrolases"/>
    <property type="match status" value="2"/>
</dbReference>
<dbReference type="HAMAP" id="MF_00195">
    <property type="entry name" value="GTPase_Der"/>
    <property type="match status" value="1"/>
</dbReference>
<dbReference type="InterPro" id="IPR031166">
    <property type="entry name" value="G_ENGA"/>
</dbReference>
<dbReference type="InterPro" id="IPR006073">
    <property type="entry name" value="GTP-bd"/>
</dbReference>
<dbReference type="InterPro" id="IPR016484">
    <property type="entry name" value="GTPase_Der"/>
</dbReference>
<dbReference type="InterPro" id="IPR032859">
    <property type="entry name" value="KH_dom-like"/>
</dbReference>
<dbReference type="InterPro" id="IPR015946">
    <property type="entry name" value="KH_dom-like_a/b"/>
</dbReference>
<dbReference type="InterPro" id="IPR027417">
    <property type="entry name" value="P-loop_NTPase"/>
</dbReference>
<dbReference type="InterPro" id="IPR005225">
    <property type="entry name" value="Small_GTP-bd"/>
</dbReference>
<dbReference type="NCBIfam" id="TIGR03594">
    <property type="entry name" value="GTPase_EngA"/>
    <property type="match status" value="1"/>
</dbReference>
<dbReference type="NCBIfam" id="TIGR00231">
    <property type="entry name" value="small_GTP"/>
    <property type="match status" value="2"/>
</dbReference>
<dbReference type="PANTHER" id="PTHR43834">
    <property type="entry name" value="GTPASE DER"/>
    <property type="match status" value="1"/>
</dbReference>
<dbReference type="PANTHER" id="PTHR43834:SF6">
    <property type="entry name" value="GTPASE DER"/>
    <property type="match status" value="1"/>
</dbReference>
<dbReference type="Pfam" id="PF14714">
    <property type="entry name" value="KH_dom-like"/>
    <property type="match status" value="1"/>
</dbReference>
<dbReference type="Pfam" id="PF01926">
    <property type="entry name" value="MMR_HSR1"/>
    <property type="match status" value="2"/>
</dbReference>
<dbReference type="PIRSF" id="PIRSF006485">
    <property type="entry name" value="GTP-binding_EngA"/>
    <property type="match status" value="1"/>
</dbReference>
<dbReference type="PRINTS" id="PR00326">
    <property type="entry name" value="GTP1OBG"/>
</dbReference>
<dbReference type="SUPFAM" id="SSF52540">
    <property type="entry name" value="P-loop containing nucleoside triphosphate hydrolases"/>
    <property type="match status" value="2"/>
</dbReference>
<dbReference type="PROSITE" id="PS51712">
    <property type="entry name" value="G_ENGA"/>
    <property type="match status" value="2"/>
</dbReference>
<reference key="1">
    <citation type="submission" date="2006-09" db="EMBL/GenBank/DDBJ databases">
        <title>Complete sequence of chromosome 1 of Shewanella sp. ANA-3.</title>
        <authorList>
            <person name="Copeland A."/>
            <person name="Lucas S."/>
            <person name="Lapidus A."/>
            <person name="Barry K."/>
            <person name="Detter J.C."/>
            <person name="Glavina del Rio T."/>
            <person name="Hammon N."/>
            <person name="Israni S."/>
            <person name="Dalin E."/>
            <person name="Tice H."/>
            <person name="Pitluck S."/>
            <person name="Chertkov O."/>
            <person name="Brettin T."/>
            <person name="Bruce D."/>
            <person name="Han C."/>
            <person name="Tapia R."/>
            <person name="Gilna P."/>
            <person name="Schmutz J."/>
            <person name="Larimer F."/>
            <person name="Land M."/>
            <person name="Hauser L."/>
            <person name="Kyrpides N."/>
            <person name="Kim E."/>
            <person name="Newman D."/>
            <person name="Salticov C."/>
            <person name="Konstantinidis K."/>
            <person name="Klappenback J."/>
            <person name="Tiedje J."/>
            <person name="Richardson P."/>
        </authorList>
    </citation>
    <scope>NUCLEOTIDE SEQUENCE [LARGE SCALE GENOMIC DNA]</scope>
    <source>
        <strain>ANA-3</strain>
    </source>
</reference>